<gene>
    <name evidence="5" type="primary">res</name>
    <name type="ordered locus">STM0358</name>
</gene>
<accession>P40815</accession>
<reference key="1">
    <citation type="journal article" date="1993" name="Gene">
        <title>Sequence of the Salmonella typhimurium StyLT1 restriction-modification genes: homologies with EcoP1 and EcoP15 type-III R-M systems and presence of helicase domains.</title>
        <authorList>
            <person name="Dartois V."/>
            <person name="de Backer O."/>
            <person name="Colson C."/>
        </authorList>
    </citation>
    <scope>NUCLEOTIDE SEQUENCE [GENOMIC DNA]</scope>
    <source>
        <strain>LT7</strain>
    </source>
</reference>
<reference key="2">
    <citation type="journal article" date="2001" name="Nature">
        <title>Complete genome sequence of Salmonella enterica serovar Typhimurium LT2.</title>
        <authorList>
            <person name="McClelland M."/>
            <person name="Sanderson K.E."/>
            <person name="Spieth J."/>
            <person name="Clifton S.W."/>
            <person name="Latreille P."/>
            <person name="Courtney L."/>
            <person name="Porwollik S."/>
            <person name="Ali J."/>
            <person name="Dante M."/>
            <person name="Du F."/>
            <person name="Hou S."/>
            <person name="Layman D."/>
            <person name="Leonard S."/>
            <person name="Nguyen C."/>
            <person name="Scott K."/>
            <person name="Holmes A."/>
            <person name="Grewal N."/>
            <person name="Mulvaney E."/>
            <person name="Ryan E."/>
            <person name="Sun H."/>
            <person name="Florea L."/>
            <person name="Miller W."/>
            <person name="Stoneking T."/>
            <person name="Nhan M."/>
            <person name="Waterston R."/>
            <person name="Wilson R.K."/>
        </authorList>
    </citation>
    <scope>NUCLEOTIDE SEQUENCE [LARGE SCALE GENOMIC DNA]</scope>
    <source>
        <strain>LT2 / SGSC1412 / ATCC 700720</strain>
    </source>
</reference>
<reference key="3">
    <citation type="journal article" date="1991" name="J. Bacteriol.">
        <title>Two-step cloning and expression in Escherichia coli of the DNA restriction-modification system StyLTI of Salmonella typhimurium.</title>
        <authorList>
            <person name="De Backer O."/>
            <person name="Colson C."/>
        </authorList>
    </citation>
    <scope>FUNCTION</scope>
    <source>
        <strain>LT7</strain>
    </source>
</reference>
<reference key="4">
    <citation type="journal article" date="2003" name="Nucleic Acids Res.">
        <title>A nomenclature for restriction enzymes, DNA methyltransferases, homing endonucleases and their genes.</title>
        <authorList>
            <person name="Roberts R.J."/>
            <person name="Belfort M."/>
            <person name="Bestor T."/>
            <person name="Bhagwat A.S."/>
            <person name="Bickle T.A."/>
            <person name="Bitinaite J."/>
            <person name="Blumenthal R.M."/>
            <person name="Degtyarev S.K."/>
            <person name="Dryden D.T."/>
            <person name="Dybvig K."/>
            <person name="Firman K."/>
            <person name="Gromova E.S."/>
            <person name="Gumport R.I."/>
            <person name="Halford S.E."/>
            <person name="Hattman S."/>
            <person name="Heitman J."/>
            <person name="Hornby D.P."/>
            <person name="Janulaitis A."/>
            <person name="Jeltsch A."/>
            <person name="Josephsen J."/>
            <person name="Kiss A."/>
            <person name="Klaenhammer T.R."/>
            <person name="Kobayashi I."/>
            <person name="Kong H."/>
            <person name="Krueger D.H."/>
            <person name="Lacks S."/>
            <person name="Marinus M.G."/>
            <person name="Miyahara M."/>
            <person name="Morgan R.D."/>
            <person name="Murray N.E."/>
            <person name="Nagaraja V."/>
            <person name="Piekarowicz A."/>
            <person name="Pingoud A."/>
            <person name="Raleigh E."/>
            <person name="Rao D.N."/>
            <person name="Reich N."/>
            <person name="Repin V.E."/>
            <person name="Selker E.U."/>
            <person name="Shaw P.C."/>
            <person name="Stein D.C."/>
            <person name="Stoddard B.L."/>
            <person name="Szybalski W."/>
            <person name="Trautner T.A."/>
            <person name="Van Etten J.L."/>
            <person name="Vitor J.M."/>
            <person name="Wilson G.G."/>
            <person name="Xu S.Y."/>
        </authorList>
    </citation>
    <scope>NOMENCLATURE</scope>
</reference>
<keyword id="KW-0067">ATP-binding</keyword>
<keyword id="KW-0238">DNA-binding</keyword>
<keyword id="KW-0255">Endonuclease</keyword>
<keyword id="KW-0347">Helicase</keyword>
<keyword id="KW-0378">Hydrolase</keyword>
<keyword id="KW-0540">Nuclease</keyword>
<keyword id="KW-0547">Nucleotide-binding</keyword>
<keyword id="KW-1185">Reference proteome</keyword>
<keyword id="KW-0680">Restriction system</keyword>
<keyword id="KW-0949">S-adenosyl-L-methionine</keyword>
<sequence>MMNILLEELPHQEQALAAILASFTGIDHAQADHNHYANPLIKERYDDKANIDVKMETGTGKTYVYTRLMYELHQKYGLFKFVLVVPTPAIKEGARNFITSDYARQHFSQFYENTRMELCTINAGDFKVKSGRKNFPAQLLSFTDASRRDSHTIQVLLINAQMLNSASMTRDDYDQTLLGGLTSPVKGLQMTRPVVIIDEPHRFARDNKFYRAIQAIQPQMIVRFGATFPDIVEGKGKNKCVRKDYYRRQPQFDLNAVDSFNDGLVKGIDIYYPNLPEEQANNRYIVDSVTAKKLILRRGSKIAEVGVGENLADVDAGFEGSIEYAGSKMLSNDLELEAGMALVPGTFGASYQELIIQDAIDKHFDTEQANFLRSNEPENNAPRIKTLSLFFIDSIKSYRDDEGWLKVTFERLLKKKLTQLIDDYQRKTLPREVEYLSFLQATLASLHSDNQNVHAGYFGEDRGSGDEAIQAEVDDILKNKEKLLSFSDHHGNWETRRFLFSKWTLREGWDNPNVFVIAKLRSSGSESSKIQEVGRGLRLPVDENGHRVHQEEWPSRLSFLIGYDEKAFASMLVDEINRDSKVQLNEQKLDEAMITLIVTERQKVDPAFTELRLLEDLDDKKLINRSNEFKPSVTLNGETKSGFAWLLEFYPELTQARVRADRIRDNKPASRLRVRLRKENWEQLSSIWEQFSRRYMLQFERSGASLEQIAAEVLRDPALYIRQKPSQVQQRLVSNEDNGRFEVAQREGELAASEFMAGMKYGHFLKQLALRTSLPVNVLHPVLMAMLRDVLHGDSRYLSEISLDNMTRALQTRINAHFAQRHDYLPLDFQASTSVFDSTARQFREEISAEIVGKNVDENAIDDPRSLYQIPPLRYDSVDPELPLLKYDYPQQVSVFGKLPKRAIQIPKYTGGSTTPDFVYRIERQDADSVYLLVETKAENMRVGDQVILDAQRKFFDMLRRQNINVEFAEATSAPAVFSTINGLIEGKAN</sequence>
<comment type="function">
    <text evidence="2 6">A type III restriction enzyme that recognizes 2 inversely oriented double-stranded sequences 5'-CAGAG-3' and cleaves DNA 25-27 base pairs downstream. After binding to one recognition site undergoes random one-dimensional diffusion along DNA until it collides with a stationary enzyme bound to the second DNA site, which is when DNA cleavage occurs. DNA restriction requires both the Res and Mod subunits.</text>
</comment>
<comment type="catalytic activity">
    <reaction>
        <text>Endonucleolytic cleavage of DNA to give specific double-stranded fragments with terminal 5'-phosphates.</text>
        <dbReference type="EC" id="3.1.21.5"/>
    </reaction>
</comment>
<comment type="cofactor">
    <cofactor>
        <name>Mg(2+)</name>
        <dbReference type="ChEBI" id="CHEBI:18420"/>
    </cofactor>
</comment>
<comment type="cofactor">
    <cofactor evidence="1">
        <name>S-adenosyl-L-methionine</name>
        <dbReference type="ChEBI" id="CHEBI:59789"/>
    </cofactor>
</comment>
<comment type="subunit">
    <text evidence="2">Contains two different subunits: Res and Mod.</text>
</comment>
<comment type="similarity">
    <text evidence="8">Belongs to the type III restriction-modification system Res protein family.</text>
</comment>
<dbReference type="EC" id="3.1.21.5"/>
<dbReference type="EMBL" id="M90544">
    <property type="status" value="NOT_ANNOTATED_CDS"/>
    <property type="molecule type" value="Genomic_DNA"/>
</dbReference>
<dbReference type="EMBL" id="AE006468">
    <property type="protein sequence ID" value="AAL19312.1"/>
    <property type="molecule type" value="Genomic_DNA"/>
</dbReference>
<dbReference type="PIR" id="JN0658">
    <property type="entry name" value="JN0658"/>
</dbReference>
<dbReference type="RefSeq" id="NP_459353.3">
    <property type="nucleotide sequence ID" value="NC_003197.2"/>
</dbReference>
<dbReference type="RefSeq" id="WP_001651666.1">
    <property type="nucleotide sequence ID" value="NC_003197.2"/>
</dbReference>
<dbReference type="SMR" id="P40815"/>
<dbReference type="STRING" id="99287.STM0358"/>
<dbReference type="REBASE" id="1788">
    <property type="entry name" value="SenLT7I"/>
</dbReference>
<dbReference type="REBASE" id="231845">
    <property type="entry name" value="Sen4024ORF3354P"/>
</dbReference>
<dbReference type="REBASE" id="233832">
    <property type="entry name" value="Sen4839ORF3406P"/>
</dbReference>
<dbReference type="PaxDb" id="99287-STM0358"/>
<dbReference type="GeneID" id="1251877"/>
<dbReference type="KEGG" id="stm:STM0358"/>
<dbReference type="HOGENOM" id="CLU_011799_1_0_6"/>
<dbReference type="OMA" id="CETKGYE"/>
<dbReference type="PhylomeDB" id="P40815"/>
<dbReference type="BioCyc" id="SENT99287:STM0358-MONOMER"/>
<dbReference type="PRO" id="PR:P40815"/>
<dbReference type="Proteomes" id="UP000001014">
    <property type="component" value="Chromosome"/>
</dbReference>
<dbReference type="GO" id="GO:0005524">
    <property type="term" value="F:ATP binding"/>
    <property type="evidence" value="ECO:0007669"/>
    <property type="project" value="UniProtKB-KW"/>
</dbReference>
<dbReference type="GO" id="GO:0003677">
    <property type="term" value="F:DNA binding"/>
    <property type="evidence" value="ECO:0007669"/>
    <property type="project" value="UniProtKB-KW"/>
</dbReference>
<dbReference type="GO" id="GO:0004386">
    <property type="term" value="F:helicase activity"/>
    <property type="evidence" value="ECO:0007669"/>
    <property type="project" value="UniProtKB-KW"/>
</dbReference>
<dbReference type="GO" id="GO:0015668">
    <property type="term" value="F:type III site-specific deoxyribonuclease activity"/>
    <property type="evidence" value="ECO:0007669"/>
    <property type="project" value="UniProtKB-EC"/>
</dbReference>
<dbReference type="GO" id="GO:0009307">
    <property type="term" value="P:DNA restriction-modification system"/>
    <property type="evidence" value="ECO:0007669"/>
    <property type="project" value="UniProtKB-KW"/>
</dbReference>
<dbReference type="CDD" id="cd18785">
    <property type="entry name" value="SF2_C"/>
    <property type="match status" value="1"/>
</dbReference>
<dbReference type="Gene3D" id="3.40.50.300">
    <property type="entry name" value="P-loop containing nucleotide triphosphate hydrolases"/>
    <property type="match status" value="2"/>
</dbReference>
<dbReference type="InterPro" id="IPR006935">
    <property type="entry name" value="Helicase/UvrB_N"/>
</dbReference>
<dbReference type="InterPro" id="IPR050742">
    <property type="entry name" value="Helicase_Restrict-Modif_Enz"/>
</dbReference>
<dbReference type="InterPro" id="IPR027417">
    <property type="entry name" value="P-loop_NTPase"/>
</dbReference>
<dbReference type="InterPro" id="IPR014883">
    <property type="entry name" value="VRR_NUC"/>
</dbReference>
<dbReference type="NCBIfam" id="NF012027">
    <property type="entry name" value="PRK15483.1"/>
    <property type="match status" value="1"/>
</dbReference>
<dbReference type="PANTHER" id="PTHR47396:SF1">
    <property type="entry name" value="ATP-DEPENDENT HELICASE IRC3-RELATED"/>
    <property type="match status" value="1"/>
</dbReference>
<dbReference type="PANTHER" id="PTHR47396">
    <property type="entry name" value="TYPE I RESTRICTION ENZYME ECOKI R PROTEIN"/>
    <property type="match status" value="1"/>
</dbReference>
<dbReference type="Pfam" id="PF04851">
    <property type="entry name" value="ResIII"/>
    <property type="match status" value="1"/>
</dbReference>
<dbReference type="Pfam" id="PF08774">
    <property type="entry name" value="VRR_NUC"/>
    <property type="match status" value="1"/>
</dbReference>
<dbReference type="SUPFAM" id="SSF52540">
    <property type="entry name" value="P-loop containing nucleoside triphosphate hydrolases"/>
    <property type="match status" value="2"/>
</dbReference>
<organism>
    <name type="scientific">Salmonella typhimurium (strain LT2 / SGSC1412 / ATCC 700720)</name>
    <dbReference type="NCBI Taxonomy" id="99287"/>
    <lineage>
        <taxon>Bacteria</taxon>
        <taxon>Pseudomonadati</taxon>
        <taxon>Pseudomonadota</taxon>
        <taxon>Gammaproteobacteria</taxon>
        <taxon>Enterobacterales</taxon>
        <taxon>Enterobacteriaceae</taxon>
        <taxon>Salmonella</taxon>
    </lineage>
</organism>
<feature type="chain" id="PRO_0000077375" description="Type III restriction-modification enzyme StyLTI Res subunit">
    <location>
        <begin position="1"/>
        <end position="990"/>
    </location>
</feature>
<feature type="domain" description="VRR-NUC" evidence="3">
    <location>
        <begin position="884"/>
        <end position="970"/>
    </location>
</feature>
<feature type="region of interest" description="Helicase-like domain" evidence="1">
    <location>
        <begin position="50"/>
        <end position="545"/>
    </location>
</feature>
<feature type="region of interest" description="Endonuclease domain" evidence="1">
    <location>
        <begin position="913"/>
        <end position="937"/>
    </location>
</feature>
<feature type="sequence variant" description="In strain: LT7." evidence="4">
    <original>A</original>
    <variation>R</variation>
    <location>
        <position position="17"/>
    </location>
</feature>
<feature type="sequence variant" description="In strain: LT7." evidence="4">
    <original>KLILRR</original>
    <variation>EINPPT</variation>
    <location>
        <begin position="293"/>
        <end position="298"/>
    </location>
</feature>
<feature type="sequence variant" description="In strain: LT7." evidence="4">
    <original>S</original>
    <variation>T</variation>
    <location>
        <position position="350"/>
    </location>
</feature>
<feature type="sequence variant" description="In strain: LT7." evidence="4">
    <original>L</original>
    <variation>V</variation>
    <location>
        <position position="420"/>
    </location>
</feature>
<feature type="sequence variant" description="In strain: LT7." evidence="4">
    <original>SG</original>
    <variation>R</variation>
    <location>
        <begin position="464"/>
        <end position="465"/>
    </location>
</feature>
<feature type="sequence variant" description="In strain: LT7." evidence="4">
    <original>GL</original>
    <variation>AV</variation>
    <location>
        <begin position="536"/>
        <end position="537"/>
    </location>
</feature>
<feature type="sequence variant" description="In strain: LT7." evidence="4">
    <original>DQVILDAQRKFFDMLRRQNINVEFAEATSAPAVFSTINGLIEGKAN</original>
    <variation>IRLFLMRNVNSSICCVGKISMSSLRKDQRAGGIFYDQWLD</variation>
    <location>
        <begin position="945"/>
        <end position="990"/>
    </location>
</feature>
<evidence type="ECO:0000250" key="1">
    <source>
        <dbReference type="UniProtKB" id="P08764"/>
    </source>
</evidence>
<evidence type="ECO:0000250" key="2">
    <source>
        <dbReference type="UniProtKB" id="Q5ZND2"/>
    </source>
</evidence>
<evidence type="ECO:0000255" key="3"/>
<evidence type="ECO:0000269" key="4">
    <source>
    </source>
</evidence>
<evidence type="ECO:0000303" key="5">
    <source>
    </source>
</evidence>
<evidence type="ECO:0000303" key="6">
    <source>
    </source>
</evidence>
<evidence type="ECO:0000303" key="7">
    <source>
    </source>
</evidence>
<evidence type="ECO:0000305" key="8"/>
<name>T3RE_SALTY</name>
<proteinExistence type="inferred from homology"/>
<protein>
    <recommendedName>
        <fullName evidence="6">Type III restriction-modification enzyme StyLTI Res subunit</fullName>
        <shortName evidence="7">Type III R-M system StyLTI</shortName>
        <ecNumber>3.1.21.5</ecNumber>
    </recommendedName>
    <alternativeName>
        <fullName evidence="6">Type III restriction enzyme StyLTI</fullName>
    </alternativeName>
</protein>